<comment type="function">
    <text evidence="1">Converts 2C-methyl-D-erythritol 2,4-cyclodiphosphate (ME-2,4cPP) into 1-hydroxy-2-methyl-2-(E)-butenyl 4-diphosphate.</text>
</comment>
<comment type="catalytic activity">
    <reaction evidence="1">
        <text>(2E)-4-hydroxy-3-methylbut-2-enyl diphosphate + oxidized [flavodoxin] + H2O + 2 H(+) = 2-C-methyl-D-erythritol 2,4-cyclic diphosphate + reduced [flavodoxin]</text>
        <dbReference type="Rhea" id="RHEA:43604"/>
        <dbReference type="Rhea" id="RHEA-COMP:10622"/>
        <dbReference type="Rhea" id="RHEA-COMP:10623"/>
        <dbReference type="ChEBI" id="CHEBI:15377"/>
        <dbReference type="ChEBI" id="CHEBI:15378"/>
        <dbReference type="ChEBI" id="CHEBI:57618"/>
        <dbReference type="ChEBI" id="CHEBI:58210"/>
        <dbReference type="ChEBI" id="CHEBI:58483"/>
        <dbReference type="ChEBI" id="CHEBI:128753"/>
        <dbReference type="EC" id="1.17.7.3"/>
    </reaction>
</comment>
<comment type="cofactor">
    <cofactor evidence="1">
        <name>[4Fe-4S] cluster</name>
        <dbReference type="ChEBI" id="CHEBI:49883"/>
    </cofactor>
    <text evidence="1">Binds 1 [4Fe-4S] cluster.</text>
</comment>
<comment type="pathway">
    <text evidence="1">Isoprenoid biosynthesis; isopentenyl diphosphate biosynthesis via DXP pathway; isopentenyl diphosphate from 1-deoxy-D-xylulose 5-phosphate: step 5/6.</text>
</comment>
<comment type="similarity">
    <text evidence="1">Belongs to the IspG family.</text>
</comment>
<sequence>MQHESPIIRRKSTRIYVGDVPIGDGAPIAVQSMTNTRTTDVEATVAQIRALEKVGADIVRVSVPTMDAAEAFKLIKQQVSVPLVADIHFDYRIALKVAEYGVDCLRINPGNIGNEERIRSVVDCARDKNIPIRIGVNGGSLEKDLQMKYGEPTPEALVESAMRHVDHLDRLNFDQFKVSVKASDVFLAVDSYRLLAKQIDQPLHLGITEAGGARAGAVKSSVGLGMLLAEGIGDTLRISLAADPVEEIKVGFDILKSLRIRSRGINFIACPSCSRQEFDVINTVNALEERLEDIITPMDVSIIGCVVNGPGEAEVSHLGLAGSNKKSAFYEDGKRQKERFDNDDLVNQLEAKIRAKASVLDQANRIDIKQED</sequence>
<organism>
    <name type="scientific">Vibrio campbellii (strain ATCC BAA-1116)</name>
    <dbReference type="NCBI Taxonomy" id="2902295"/>
    <lineage>
        <taxon>Bacteria</taxon>
        <taxon>Pseudomonadati</taxon>
        <taxon>Pseudomonadota</taxon>
        <taxon>Gammaproteobacteria</taxon>
        <taxon>Vibrionales</taxon>
        <taxon>Vibrionaceae</taxon>
        <taxon>Vibrio</taxon>
    </lineage>
</organism>
<protein>
    <recommendedName>
        <fullName evidence="1">4-hydroxy-3-methylbut-2-en-1-yl diphosphate synthase (flavodoxin)</fullName>
        <ecNumber evidence="1">1.17.7.3</ecNumber>
    </recommendedName>
    <alternativeName>
        <fullName evidence="1">1-hydroxy-2-methyl-2-(E)-butenyl 4-diphosphate synthase</fullName>
    </alternativeName>
</protein>
<accession>A7MU42</accession>
<feature type="chain" id="PRO_1000011541" description="4-hydroxy-3-methylbut-2-en-1-yl diphosphate synthase (flavodoxin)">
    <location>
        <begin position="1"/>
        <end position="372"/>
    </location>
</feature>
<feature type="binding site" evidence="1">
    <location>
        <position position="270"/>
    </location>
    <ligand>
        <name>[4Fe-4S] cluster</name>
        <dbReference type="ChEBI" id="CHEBI:49883"/>
    </ligand>
</feature>
<feature type="binding site" evidence="1">
    <location>
        <position position="273"/>
    </location>
    <ligand>
        <name>[4Fe-4S] cluster</name>
        <dbReference type="ChEBI" id="CHEBI:49883"/>
    </ligand>
</feature>
<feature type="binding site" evidence="1">
    <location>
        <position position="305"/>
    </location>
    <ligand>
        <name>[4Fe-4S] cluster</name>
        <dbReference type="ChEBI" id="CHEBI:49883"/>
    </ligand>
</feature>
<feature type="binding site" evidence="1">
    <location>
        <position position="312"/>
    </location>
    <ligand>
        <name>[4Fe-4S] cluster</name>
        <dbReference type="ChEBI" id="CHEBI:49883"/>
    </ligand>
</feature>
<name>ISPG_VIBC1</name>
<keyword id="KW-0004">4Fe-4S</keyword>
<keyword id="KW-0408">Iron</keyword>
<keyword id="KW-0411">Iron-sulfur</keyword>
<keyword id="KW-0414">Isoprene biosynthesis</keyword>
<keyword id="KW-0479">Metal-binding</keyword>
<keyword id="KW-0560">Oxidoreductase</keyword>
<reference key="1">
    <citation type="submission" date="2007-08" db="EMBL/GenBank/DDBJ databases">
        <authorList>
            <consortium name="The Vibrio harveyi Genome Sequencing Project"/>
            <person name="Bassler B."/>
            <person name="Clifton S.W."/>
            <person name="Fulton L."/>
            <person name="Delehaunty K."/>
            <person name="Fronick C."/>
            <person name="Harrison M."/>
            <person name="Markivic C."/>
            <person name="Fulton R."/>
            <person name="Tin-Wollam A.-M."/>
            <person name="Shah N."/>
            <person name="Pepin K."/>
            <person name="Nash W."/>
            <person name="Thiruvilangam P."/>
            <person name="Bhonagiri V."/>
            <person name="Waters C."/>
            <person name="Tu K.C."/>
            <person name="Irgon J."/>
            <person name="Wilson R.K."/>
        </authorList>
    </citation>
    <scope>NUCLEOTIDE SEQUENCE [LARGE SCALE GENOMIC DNA]</scope>
    <source>
        <strain>ATCC BAA-1116 / BB120</strain>
    </source>
</reference>
<gene>
    <name evidence="1" type="primary">ispG</name>
    <name type="ordered locus">VIBHAR_01067</name>
</gene>
<dbReference type="EC" id="1.17.7.3" evidence="1"/>
<dbReference type="EMBL" id="CP000789">
    <property type="protein sequence ID" value="ABU70060.1"/>
    <property type="molecule type" value="Genomic_DNA"/>
</dbReference>
<dbReference type="RefSeq" id="WP_005424674.1">
    <property type="nucleotide sequence ID" value="NC_022269.1"/>
</dbReference>
<dbReference type="SMR" id="A7MU42"/>
<dbReference type="GeneID" id="83582808"/>
<dbReference type="KEGG" id="vha:VIBHAR_01067"/>
<dbReference type="PATRIC" id="fig|338187.25.peg.1561"/>
<dbReference type="UniPathway" id="UPA00056">
    <property type="reaction ID" value="UER00096"/>
</dbReference>
<dbReference type="Proteomes" id="UP000008152">
    <property type="component" value="Chromosome I"/>
</dbReference>
<dbReference type="GO" id="GO:0051539">
    <property type="term" value="F:4 iron, 4 sulfur cluster binding"/>
    <property type="evidence" value="ECO:0007669"/>
    <property type="project" value="UniProtKB-UniRule"/>
</dbReference>
<dbReference type="GO" id="GO:0046429">
    <property type="term" value="F:4-hydroxy-3-methylbut-2-en-1-yl diphosphate synthase activity (ferredoxin)"/>
    <property type="evidence" value="ECO:0007669"/>
    <property type="project" value="UniProtKB-UniRule"/>
</dbReference>
<dbReference type="GO" id="GO:0141197">
    <property type="term" value="F:4-hydroxy-3-methylbut-2-enyl-diphosphate synthase activity (flavodoxin)"/>
    <property type="evidence" value="ECO:0007669"/>
    <property type="project" value="UniProtKB-EC"/>
</dbReference>
<dbReference type="GO" id="GO:0005506">
    <property type="term" value="F:iron ion binding"/>
    <property type="evidence" value="ECO:0007669"/>
    <property type="project" value="InterPro"/>
</dbReference>
<dbReference type="GO" id="GO:0019288">
    <property type="term" value="P:isopentenyl diphosphate biosynthetic process, methylerythritol 4-phosphate pathway"/>
    <property type="evidence" value="ECO:0007669"/>
    <property type="project" value="UniProtKB-UniRule"/>
</dbReference>
<dbReference type="GO" id="GO:0016114">
    <property type="term" value="P:terpenoid biosynthetic process"/>
    <property type="evidence" value="ECO:0007669"/>
    <property type="project" value="InterPro"/>
</dbReference>
<dbReference type="FunFam" id="3.20.20.20:FF:000001">
    <property type="entry name" value="4-hydroxy-3-methylbut-2-en-1-yl diphosphate synthase (flavodoxin)"/>
    <property type="match status" value="1"/>
</dbReference>
<dbReference type="FunFam" id="3.30.413.10:FF:000002">
    <property type="entry name" value="4-hydroxy-3-methylbut-2-en-1-yl diphosphate synthase (flavodoxin)"/>
    <property type="match status" value="1"/>
</dbReference>
<dbReference type="Gene3D" id="3.20.20.20">
    <property type="entry name" value="Dihydropteroate synthase-like"/>
    <property type="match status" value="1"/>
</dbReference>
<dbReference type="Gene3D" id="3.30.413.10">
    <property type="entry name" value="Sulfite Reductase Hemoprotein, domain 1"/>
    <property type="match status" value="1"/>
</dbReference>
<dbReference type="HAMAP" id="MF_00159">
    <property type="entry name" value="IspG"/>
    <property type="match status" value="1"/>
</dbReference>
<dbReference type="InterPro" id="IPR011005">
    <property type="entry name" value="Dihydropteroate_synth-like_sf"/>
</dbReference>
<dbReference type="InterPro" id="IPR016425">
    <property type="entry name" value="IspG_bac"/>
</dbReference>
<dbReference type="InterPro" id="IPR004588">
    <property type="entry name" value="IspG_bac-typ"/>
</dbReference>
<dbReference type="InterPro" id="IPR045854">
    <property type="entry name" value="NO2/SO3_Rdtase_4Fe4S_sf"/>
</dbReference>
<dbReference type="NCBIfam" id="TIGR00612">
    <property type="entry name" value="ispG_gcpE"/>
    <property type="match status" value="1"/>
</dbReference>
<dbReference type="NCBIfam" id="NF001540">
    <property type="entry name" value="PRK00366.1"/>
    <property type="match status" value="1"/>
</dbReference>
<dbReference type="PANTHER" id="PTHR30454">
    <property type="entry name" value="4-HYDROXY-3-METHYLBUT-2-EN-1-YL DIPHOSPHATE SYNTHASE"/>
    <property type="match status" value="1"/>
</dbReference>
<dbReference type="PANTHER" id="PTHR30454:SF0">
    <property type="entry name" value="4-HYDROXY-3-METHYLBUT-2-EN-1-YL DIPHOSPHATE SYNTHASE (FERREDOXIN), CHLOROPLASTIC"/>
    <property type="match status" value="1"/>
</dbReference>
<dbReference type="Pfam" id="PF04551">
    <property type="entry name" value="GcpE"/>
    <property type="match status" value="1"/>
</dbReference>
<dbReference type="PIRSF" id="PIRSF004640">
    <property type="entry name" value="IspG"/>
    <property type="match status" value="1"/>
</dbReference>
<dbReference type="SUPFAM" id="SSF51717">
    <property type="entry name" value="Dihydropteroate synthetase-like"/>
    <property type="match status" value="1"/>
</dbReference>
<dbReference type="SUPFAM" id="SSF56014">
    <property type="entry name" value="Nitrite and sulphite reductase 4Fe-4S domain-like"/>
    <property type="match status" value="1"/>
</dbReference>
<evidence type="ECO:0000255" key="1">
    <source>
        <dbReference type="HAMAP-Rule" id="MF_00159"/>
    </source>
</evidence>
<proteinExistence type="inferred from homology"/>